<name>TRI12_FUSSP</name>
<sequence>MTVVVPEEGLDLESQPDDRMRAKALATSAAELPDGYYRSPRIVASFAAFSMNVVATYFVLQASASALPNILQDVGQSENSSLFSTLWTTGQAVSILMMGRLTDRFGRRPFVILTHILGLVGAIVGCTATKFNTLLAAMTMLGVAAGPAGASPLFIGELMSNKTKFLGLLIVSAPVVATNGLSPYLGQRLAIQGSWRWIFYIYIIMSTIAVTLIIIWYYPPSFAQLHGKKVSKREELAKVDWIGIILVIAGTSLFLLGVSWGGQPNNPWNSAKVIGLISSGAGTLVIFALYEVYGKPERPMVPPSLFKDTRGFVCILIISSIMGSMHLSLVIMYPQQVVNIFGSSLKNWEETAWMSATASFGTGAGVVVLGSLFHLVRHIRWQILVGAMWLTAFLGAMSSINRDNKNSAIALSVMTGFVVAWAQDITMLLVQFITTDENLGVAFAVVAAARPFAGSIFTAAFISVYTNRYPRELATHLSSALRGTGFPQGSFSSLLEAAKSGRMEAVNALPGMTTEISSVVSQAMADSYTASYANVYYFAMALGVIPIIASLCMRDLDCYLTDHVPHQLYDRKNAHKDVLEGNSESQPSPIILSMADKE</sequence>
<evidence type="ECO:0000255" key="1"/>
<evidence type="ECO:0000255" key="2">
    <source>
        <dbReference type="PROSITE-ProRule" id="PRU00498"/>
    </source>
</evidence>
<evidence type="ECO:0000256" key="3">
    <source>
        <dbReference type="SAM" id="MobiDB-lite"/>
    </source>
</evidence>
<evidence type="ECO:0000269" key="4">
    <source>
    </source>
</evidence>
<evidence type="ECO:0000269" key="5">
    <source>
    </source>
</evidence>
<evidence type="ECO:0000269" key="6">
    <source>
    </source>
</evidence>
<evidence type="ECO:0000303" key="7">
    <source>
    </source>
</evidence>
<evidence type="ECO:0000303" key="8">
    <source>
    </source>
</evidence>
<evidence type="ECO:0000305" key="9"/>
<organism>
    <name type="scientific">Fusarium sporotrichioides</name>
    <dbReference type="NCBI Taxonomy" id="5514"/>
    <lineage>
        <taxon>Eukaryota</taxon>
        <taxon>Fungi</taxon>
        <taxon>Dikarya</taxon>
        <taxon>Ascomycota</taxon>
        <taxon>Pezizomycotina</taxon>
        <taxon>Sordariomycetes</taxon>
        <taxon>Hypocreomycetidae</taxon>
        <taxon>Hypocreales</taxon>
        <taxon>Nectriaceae</taxon>
        <taxon>Fusarium</taxon>
    </lineage>
</organism>
<gene>
    <name evidence="7" type="primary">TRI12</name>
</gene>
<dbReference type="EMBL" id="AF359360">
    <property type="protein sequence ID" value="AAK33071.1"/>
    <property type="molecule type" value="Genomic_DNA"/>
</dbReference>
<dbReference type="SMR" id="Q9C1B3"/>
<dbReference type="TCDB" id="2.A.1.3.47">
    <property type="family name" value="the major facilitator superfamily (mfs)"/>
</dbReference>
<dbReference type="GlyCosmos" id="Q9C1B3">
    <property type="glycosylation" value="2 sites, No reported glycans"/>
</dbReference>
<dbReference type="GO" id="GO:0005886">
    <property type="term" value="C:plasma membrane"/>
    <property type="evidence" value="ECO:0007669"/>
    <property type="project" value="UniProtKB-SubCell"/>
</dbReference>
<dbReference type="GO" id="GO:0022857">
    <property type="term" value="F:transmembrane transporter activity"/>
    <property type="evidence" value="ECO:0007669"/>
    <property type="project" value="InterPro"/>
</dbReference>
<dbReference type="CDD" id="cd06179">
    <property type="entry name" value="MFS_TRI12_like"/>
    <property type="match status" value="1"/>
</dbReference>
<dbReference type="Gene3D" id="1.20.1250.20">
    <property type="entry name" value="MFS general substrate transporter like domains"/>
    <property type="match status" value="1"/>
</dbReference>
<dbReference type="InterPro" id="IPR020846">
    <property type="entry name" value="MFS_dom"/>
</dbReference>
<dbReference type="InterPro" id="IPR010573">
    <property type="entry name" value="MFS_Str1/Tri12-like"/>
</dbReference>
<dbReference type="InterPro" id="IPR036259">
    <property type="entry name" value="MFS_trans_sf"/>
</dbReference>
<dbReference type="InterPro" id="IPR053791">
    <property type="entry name" value="MFS_Tri12-like"/>
</dbReference>
<dbReference type="PANTHER" id="PTHR23501">
    <property type="entry name" value="MAJOR FACILITATOR SUPERFAMILY"/>
    <property type="match status" value="1"/>
</dbReference>
<dbReference type="PANTHER" id="PTHR23501:SF109">
    <property type="entry name" value="MAJOR FACILITATOR SUPERFAMILY (MFS) PROFILE DOMAIN-CONTAINING PROTEIN-RELATED"/>
    <property type="match status" value="1"/>
</dbReference>
<dbReference type="Pfam" id="PF06609">
    <property type="entry name" value="TRI12"/>
    <property type="match status" value="1"/>
</dbReference>
<dbReference type="SUPFAM" id="SSF103473">
    <property type="entry name" value="MFS general substrate transporter"/>
    <property type="match status" value="1"/>
</dbReference>
<dbReference type="PROSITE" id="PS50850">
    <property type="entry name" value="MFS"/>
    <property type="match status" value="1"/>
</dbReference>
<protein>
    <recommendedName>
        <fullName evidence="7">Trichothecene efflux pump TRI12</fullName>
    </recommendedName>
    <alternativeName>
        <fullName evidence="8">Core trichothecene cluster (CTC) protein 12</fullName>
    </alternativeName>
</protein>
<reference key="1">
    <citation type="journal article" date="1999" name="Mol. Gen. Genet.">
        <title>TRI12, a trichothecene efflux pump from Fusarium sporotrichioides: gene isolation and expression in yeast.</title>
        <authorList>
            <person name="Alexander N.J."/>
            <person name="McCormick S.P."/>
            <person name="Hohn T.M."/>
        </authorList>
    </citation>
    <scope>NUCLEOTIDE SEQUENCE [GENOMIC DNA]</scope>
    <scope>FUNCTION</scope>
    <scope>DISRUPTION PHENOTYPE</scope>
    <source>
        <strain>ATCC 24631 / NRRL 3299</strain>
    </source>
</reference>
<reference key="2">
    <citation type="journal article" date="2001" name="Fungal Genet. Biol.">
        <title>A genetic and biochemical approach to study trichothecene diversity in Fusarium sporotrichioides and Fusarium graminearum.</title>
        <authorList>
            <person name="Brown D.W."/>
            <person name="McCormick S.P."/>
            <person name="Alexander N.J."/>
            <person name="Proctor R.H."/>
            <person name="Desjardins A.E."/>
        </authorList>
    </citation>
    <scope>NUCLEOTIDE SEQUENCE [GENOMIC DNA]</scope>
    <scope>FUNCTION</scope>
    <source>
        <strain>ATCC 24631 / NRRL 3299</strain>
    </source>
</reference>
<reference key="3">
    <citation type="journal article" date="2003" name="Appl. Environ. Microbiol.">
        <title>Identification of new genes positively regulated by Tri10 and a regulatory network for trichothecene mycotoxin production.</title>
        <authorList>
            <person name="Peplow A.W."/>
            <person name="Tag A.G."/>
            <person name="Garifullina G.F."/>
            <person name="Beremand M.N."/>
        </authorList>
    </citation>
    <scope>INDUCTION</scope>
</reference>
<comment type="function">
    <text evidence="4 5">Efflux pump that provides the dual role of trichothecene export and self-protection by allowing the fungus to evade the harmful effect of its own trichothecene production (PubMed:10485289, PubMed:11352533).</text>
</comment>
<comment type="subcellular location">
    <subcellularLocation>
        <location evidence="9">Cell membrane</location>
        <topology evidence="1">Multi-pass membrane protein</topology>
    </subcellularLocation>
</comment>
<comment type="induction">
    <text evidence="6">Expression is positively regulated by the trichothecene cluster-specific transcription activator TRI10 (PubMed:12732543).</text>
</comment>
<comment type="disruption phenotype">
    <text evidence="4">Results in both reduced growth on complex media and reduced levels of trichothecene production (PubMed:10485289).</text>
</comment>
<comment type="similarity">
    <text evidence="9">Belongs to the major facilitator superfamily.</text>
</comment>
<accession>Q9C1B3</accession>
<proteinExistence type="evidence at transcript level"/>
<keyword id="KW-1003">Cell membrane</keyword>
<keyword id="KW-0325">Glycoprotein</keyword>
<keyword id="KW-0472">Membrane</keyword>
<keyword id="KW-0812">Transmembrane</keyword>
<keyword id="KW-1133">Transmembrane helix</keyword>
<keyword id="KW-0813">Transport</keyword>
<keyword id="KW-0843">Virulence</keyword>
<feature type="chain" id="PRO_0000442370" description="Trichothecene efflux pump TRI12">
    <location>
        <begin position="1"/>
        <end position="598"/>
    </location>
</feature>
<feature type="transmembrane region" description="Helical" evidence="1">
    <location>
        <begin position="42"/>
        <end position="62"/>
    </location>
</feature>
<feature type="transmembrane region" description="Helical" evidence="1">
    <location>
        <begin position="109"/>
        <end position="129"/>
    </location>
</feature>
<feature type="transmembrane region" description="Helical" evidence="1">
    <location>
        <begin position="135"/>
        <end position="155"/>
    </location>
</feature>
<feature type="transmembrane region" description="Helical" evidence="1">
    <location>
        <begin position="165"/>
        <end position="185"/>
    </location>
</feature>
<feature type="transmembrane region" description="Helical" evidence="1">
    <location>
        <begin position="197"/>
        <end position="217"/>
    </location>
</feature>
<feature type="transmembrane region" description="Helical" evidence="1">
    <location>
        <begin position="241"/>
        <end position="261"/>
    </location>
</feature>
<feature type="transmembrane region" description="Helical" evidence="1">
    <location>
        <begin position="273"/>
        <end position="293"/>
    </location>
</feature>
<feature type="transmembrane region" description="Helical" evidence="1">
    <location>
        <begin position="312"/>
        <end position="332"/>
    </location>
</feature>
<feature type="transmembrane region" description="Helical" evidence="1">
    <location>
        <begin position="356"/>
        <end position="376"/>
    </location>
</feature>
<feature type="transmembrane region" description="Helical" evidence="1">
    <location>
        <begin position="381"/>
        <end position="401"/>
    </location>
</feature>
<feature type="transmembrane region" description="Helical" evidence="1">
    <location>
        <begin position="409"/>
        <end position="429"/>
    </location>
</feature>
<feature type="transmembrane region" description="Helical" evidence="1">
    <location>
        <begin position="442"/>
        <end position="462"/>
    </location>
</feature>
<feature type="transmembrane region" description="Helical" evidence="1">
    <location>
        <begin position="533"/>
        <end position="553"/>
    </location>
</feature>
<feature type="region of interest" description="Disordered" evidence="3">
    <location>
        <begin position="579"/>
        <end position="598"/>
    </location>
</feature>
<feature type="glycosylation site" description="N-linked (GlcNAc...) asparagine" evidence="2">
    <location>
        <position position="79"/>
    </location>
</feature>
<feature type="glycosylation site" description="N-linked (GlcNAc...) asparagine" evidence="2">
    <location>
        <position position="161"/>
    </location>
</feature>